<accession>Q2UPA7</accession>
<feature type="signal peptide" evidence="1">
    <location>
        <begin position="1"/>
        <end position="19"/>
    </location>
</feature>
<feature type="chain" id="PRO_0000441203" description="Dehydrogenase aclE">
    <location>
        <begin position="20"/>
        <end position="366"/>
    </location>
</feature>
<feature type="glycosylation site" description="N-linked (GlcNAc...) asparagine" evidence="2">
    <location>
        <position position="330"/>
    </location>
</feature>
<name>ACLE_ASPOR</name>
<protein>
    <recommendedName>
        <fullName evidence="4">Dehydrogenase aclE</fullName>
        <ecNumber evidence="6">1.-.-.-</ecNumber>
    </recommendedName>
    <alternativeName>
        <fullName evidence="4">Aspirochlorine biosynthesis protein E</fullName>
    </alternativeName>
</protein>
<comment type="function">
    <text evidence="3">Dehydrogenase; part of the gene cluster that mediates the biosynthesis of aspirochlorine (or antibiotic A30641), an unusual halogenated spiro compound with distinctive antifungal properties due to selective inhibition of protein biosynthesis, and which is also active against bacteria, viruses, and murine tumor cells (PubMed:25302411). The non-ribosomal peptide synthetase (NRPS) aclP is responsible the formation of the diketopiperazine (DKP) core from the condensation of 2 phenylalanine residues (PubMed:25302411). One Phe residue is tailored into chlorotyrosine by hydroxylation and chlorination, whereas the second Phe undergoes an unprecedented C-C bond cleavage to be converted into glycine (PubMed:25302411). After formation of the DKP, sulfur is incorporated into the DKP by conjugation with glutathione by aclG, followed by its stepwise degradation to the thiol by aclI, aclJ and aclK, and the dithiol oxidation by aclT (PubMed:25302411). In addition, oxygenases (aclB, aclC, aclL and aclO) and O-methyltransferases (aclM and aclU) act as tailoring enzymes to produce the intermediate dechloroaspirochlorine (PubMed:25302411). Ultimately, chlorination of dechloroaspirochlorine by the halogenase aclH is the last step in the aspirochlorine pathway (PubMed:25302411).</text>
</comment>
<comment type="pathway">
    <text evidence="6">Mycotoxin biosynthesis.</text>
</comment>
<comment type="similarity">
    <text evidence="5">Belongs to the Gfo/Idh/MocA family.</text>
</comment>
<reference key="1">
    <citation type="journal article" date="2005" name="Nature">
        <title>Genome sequencing and analysis of Aspergillus oryzae.</title>
        <authorList>
            <person name="Machida M."/>
            <person name="Asai K."/>
            <person name="Sano M."/>
            <person name="Tanaka T."/>
            <person name="Kumagai T."/>
            <person name="Terai G."/>
            <person name="Kusumoto K."/>
            <person name="Arima T."/>
            <person name="Akita O."/>
            <person name="Kashiwagi Y."/>
            <person name="Abe K."/>
            <person name="Gomi K."/>
            <person name="Horiuchi H."/>
            <person name="Kitamoto K."/>
            <person name="Kobayashi T."/>
            <person name="Takeuchi M."/>
            <person name="Denning D.W."/>
            <person name="Galagan J.E."/>
            <person name="Nierman W.C."/>
            <person name="Yu J."/>
            <person name="Archer D.B."/>
            <person name="Bennett J.W."/>
            <person name="Bhatnagar D."/>
            <person name="Cleveland T.E."/>
            <person name="Fedorova N.D."/>
            <person name="Gotoh O."/>
            <person name="Horikawa H."/>
            <person name="Hosoyama A."/>
            <person name="Ichinomiya M."/>
            <person name="Igarashi R."/>
            <person name="Iwashita K."/>
            <person name="Juvvadi P.R."/>
            <person name="Kato M."/>
            <person name="Kato Y."/>
            <person name="Kin T."/>
            <person name="Kokubun A."/>
            <person name="Maeda H."/>
            <person name="Maeyama N."/>
            <person name="Maruyama J."/>
            <person name="Nagasaki H."/>
            <person name="Nakajima T."/>
            <person name="Oda K."/>
            <person name="Okada K."/>
            <person name="Paulsen I."/>
            <person name="Sakamoto K."/>
            <person name="Sawano T."/>
            <person name="Takahashi M."/>
            <person name="Takase K."/>
            <person name="Terabayashi Y."/>
            <person name="Wortman J.R."/>
            <person name="Yamada O."/>
            <person name="Yamagata Y."/>
            <person name="Anazawa H."/>
            <person name="Hata Y."/>
            <person name="Koide Y."/>
            <person name="Komori T."/>
            <person name="Koyama Y."/>
            <person name="Minetoki T."/>
            <person name="Suharnan S."/>
            <person name="Tanaka A."/>
            <person name="Isono K."/>
            <person name="Kuhara S."/>
            <person name="Ogasawara N."/>
            <person name="Kikuchi H."/>
        </authorList>
    </citation>
    <scope>NUCLEOTIDE SEQUENCE [LARGE SCALE GENOMIC DNA]</scope>
    <source>
        <strain>ATCC 42149 / RIB 40</strain>
    </source>
</reference>
<reference key="2">
    <citation type="journal article" date="2014" name="Angew. Chem. Int. Ed.">
        <title>Biosynthesis of the halogenated mycotoxin aspirochlorine in koji mold involves a cryptic amino acid conversion.</title>
        <authorList>
            <person name="Chankhamjon P."/>
            <person name="Boettger-Schmidt D."/>
            <person name="Scherlach K."/>
            <person name="Urbansky B."/>
            <person name="Lackner G."/>
            <person name="Kalb D."/>
            <person name="Dahse H.M."/>
            <person name="Hoffmeister D."/>
            <person name="Hertweck C."/>
        </authorList>
    </citation>
    <scope>FUNCTION</scope>
    <scope>PATHWAY</scope>
</reference>
<keyword id="KW-0325">Glycoprotein</keyword>
<keyword id="KW-0560">Oxidoreductase</keyword>
<keyword id="KW-1185">Reference proteome</keyword>
<keyword id="KW-0732">Signal</keyword>
<proteinExistence type="inferred from homology"/>
<gene>
    <name evidence="4" type="primary">aclE</name>
    <name type="ORF">AO090001000045</name>
</gene>
<evidence type="ECO:0000255" key="1"/>
<evidence type="ECO:0000255" key="2">
    <source>
        <dbReference type="PROSITE-ProRule" id="PRU00498"/>
    </source>
</evidence>
<evidence type="ECO:0000269" key="3">
    <source>
    </source>
</evidence>
<evidence type="ECO:0000303" key="4">
    <source>
    </source>
</evidence>
<evidence type="ECO:0000305" key="5"/>
<evidence type="ECO:0000305" key="6">
    <source>
    </source>
</evidence>
<sequence>MSKRIRLGIVGLSADPSHCTNYIHKIPLTTTPLKEKYEITAVSMSSPEKAEAAAIAHGLPRERGYHSVESLAKDPDVDLVVVSVKVPRRAELAMAAIEAGKDVYVEWPFASNLAAAEALAQRARERQVKSMVGLPTRLAPQVLKMKEILRSGSLGRILATNLLVTDDLFLKFHADKRHSHDKTNGANIVTIAGGHLLDAMAFLLGEFTTLHAHTSMLFPKPVLCDTDGNLKTGQFNDSPDTFTMHGKIGISEVPVSVCMYSHPPTTPNLFQWVITGEKGSLKMEGPSLMIHAIPPKLMMTSFGSETVCWEEISLENTIVSGAEYQAWLDNDTERIVTLDEAVVRYRMVDAILRSAESGQCTSYRYD</sequence>
<organism>
    <name type="scientific">Aspergillus oryzae (strain ATCC 42149 / RIB 40)</name>
    <name type="common">Yellow koji mold</name>
    <dbReference type="NCBI Taxonomy" id="510516"/>
    <lineage>
        <taxon>Eukaryota</taxon>
        <taxon>Fungi</taxon>
        <taxon>Dikarya</taxon>
        <taxon>Ascomycota</taxon>
        <taxon>Pezizomycotina</taxon>
        <taxon>Eurotiomycetes</taxon>
        <taxon>Eurotiomycetidae</taxon>
        <taxon>Eurotiales</taxon>
        <taxon>Aspergillaceae</taxon>
        <taxon>Aspergillus</taxon>
        <taxon>Aspergillus subgen. Circumdati</taxon>
    </lineage>
</organism>
<dbReference type="EC" id="1.-.-.-" evidence="6"/>
<dbReference type="EMBL" id="BA000050">
    <property type="protein sequence ID" value="BAE56608.1"/>
    <property type="molecule type" value="Genomic_DNA"/>
</dbReference>
<dbReference type="RefSeq" id="XP_001818610.1">
    <property type="nucleotide sequence ID" value="XM_001818558.2"/>
</dbReference>
<dbReference type="SMR" id="Q2UPA7"/>
<dbReference type="STRING" id="510516.Q2UPA7"/>
<dbReference type="GlyCosmos" id="Q2UPA7">
    <property type="glycosylation" value="1 site, No reported glycans"/>
</dbReference>
<dbReference type="EnsemblFungi" id="BAE56608">
    <property type="protein sequence ID" value="BAE56608"/>
    <property type="gene ID" value="AO090001000045"/>
</dbReference>
<dbReference type="GeneID" id="5990581"/>
<dbReference type="KEGG" id="aor:AO090001000045"/>
<dbReference type="VEuPathDB" id="FungiDB:AO090001000045"/>
<dbReference type="HOGENOM" id="CLU_023194_25_2_1"/>
<dbReference type="OMA" id="CWEEISL"/>
<dbReference type="OrthoDB" id="67347at5052"/>
<dbReference type="Proteomes" id="UP000006564">
    <property type="component" value="Chromosome 2"/>
</dbReference>
<dbReference type="GO" id="GO:0000166">
    <property type="term" value="F:nucleotide binding"/>
    <property type="evidence" value="ECO:0007669"/>
    <property type="project" value="InterPro"/>
</dbReference>
<dbReference type="GO" id="GO:0016491">
    <property type="term" value="F:oxidoreductase activity"/>
    <property type="evidence" value="ECO:0007669"/>
    <property type="project" value="UniProtKB-KW"/>
</dbReference>
<dbReference type="Gene3D" id="3.30.360.10">
    <property type="entry name" value="Dihydrodipicolinate Reductase, domain 2"/>
    <property type="match status" value="1"/>
</dbReference>
<dbReference type="Gene3D" id="3.40.50.720">
    <property type="entry name" value="NAD(P)-binding Rossmann-like Domain"/>
    <property type="match status" value="1"/>
</dbReference>
<dbReference type="InterPro" id="IPR055080">
    <property type="entry name" value="Gal80p-like_C"/>
</dbReference>
<dbReference type="InterPro" id="IPR000683">
    <property type="entry name" value="Gfo/Idh/MocA-like_OxRdtase_N"/>
</dbReference>
<dbReference type="InterPro" id="IPR051317">
    <property type="entry name" value="Gfo/Idh/MocA_oxidoreduct"/>
</dbReference>
<dbReference type="InterPro" id="IPR036291">
    <property type="entry name" value="NAD(P)-bd_dom_sf"/>
</dbReference>
<dbReference type="PANTHER" id="PTHR43708">
    <property type="entry name" value="CONSERVED EXPRESSED OXIDOREDUCTASE (EUROFUNG)"/>
    <property type="match status" value="1"/>
</dbReference>
<dbReference type="PANTHER" id="PTHR43708:SF1">
    <property type="entry name" value="GALACTOSE_LACTOSE METABOLISM REGULATORY PROTEIN GAL80"/>
    <property type="match status" value="1"/>
</dbReference>
<dbReference type="Pfam" id="PF22685">
    <property type="entry name" value="Gal80p_C-like"/>
    <property type="match status" value="1"/>
</dbReference>
<dbReference type="Pfam" id="PF01408">
    <property type="entry name" value="GFO_IDH_MocA"/>
    <property type="match status" value="1"/>
</dbReference>
<dbReference type="SUPFAM" id="SSF55347">
    <property type="entry name" value="Glyceraldehyde-3-phosphate dehydrogenase-like, C-terminal domain"/>
    <property type="match status" value="1"/>
</dbReference>
<dbReference type="SUPFAM" id="SSF51735">
    <property type="entry name" value="NAD(P)-binding Rossmann-fold domains"/>
    <property type="match status" value="1"/>
</dbReference>